<dbReference type="EMBL" id="CP000139">
    <property type="protein sequence ID" value="ABR41246.1"/>
    <property type="molecule type" value="Genomic_DNA"/>
</dbReference>
<dbReference type="RefSeq" id="WP_005839377.1">
    <property type="nucleotide sequence ID" value="NZ_JANSWM010000066.1"/>
</dbReference>
<dbReference type="SMR" id="A6L6D2"/>
<dbReference type="STRING" id="435590.BVU_3635"/>
<dbReference type="PaxDb" id="435590-BVU_3635"/>
<dbReference type="GeneID" id="5304594"/>
<dbReference type="KEGG" id="bvu:BVU_3635"/>
<dbReference type="eggNOG" id="COG0211">
    <property type="taxonomic scope" value="Bacteria"/>
</dbReference>
<dbReference type="HOGENOM" id="CLU_095424_4_0_10"/>
<dbReference type="BioCyc" id="BVUL435590:G1G59-3767-MONOMER"/>
<dbReference type="Proteomes" id="UP000002861">
    <property type="component" value="Chromosome"/>
</dbReference>
<dbReference type="GO" id="GO:0022625">
    <property type="term" value="C:cytosolic large ribosomal subunit"/>
    <property type="evidence" value="ECO:0007669"/>
    <property type="project" value="TreeGrafter"/>
</dbReference>
<dbReference type="GO" id="GO:0003735">
    <property type="term" value="F:structural constituent of ribosome"/>
    <property type="evidence" value="ECO:0007669"/>
    <property type="project" value="InterPro"/>
</dbReference>
<dbReference type="GO" id="GO:0006412">
    <property type="term" value="P:translation"/>
    <property type="evidence" value="ECO:0007669"/>
    <property type="project" value="UniProtKB-UniRule"/>
</dbReference>
<dbReference type="FunFam" id="2.40.50.100:FF:000026">
    <property type="entry name" value="50S ribosomal protein L27"/>
    <property type="match status" value="1"/>
</dbReference>
<dbReference type="Gene3D" id="2.40.50.100">
    <property type="match status" value="1"/>
</dbReference>
<dbReference type="HAMAP" id="MF_00539">
    <property type="entry name" value="Ribosomal_bL27"/>
    <property type="match status" value="1"/>
</dbReference>
<dbReference type="InterPro" id="IPR001684">
    <property type="entry name" value="Ribosomal_bL27"/>
</dbReference>
<dbReference type="InterPro" id="IPR018261">
    <property type="entry name" value="Ribosomal_bL27_CS"/>
</dbReference>
<dbReference type="NCBIfam" id="TIGR00062">
    <property type="entry name" value="L27"/>
    <property type="match status" value="1"/>
</dbReference>
<dbReference type="PANTHER" id="PTHR15893:SF0">
    <property type="entry name" value="LARGE RIBOSOMAL SUBUNIT PROTEIN BL27M"/>
    <property type="match status" value="1"/>
</dbReference>
<dbReference type="PANTHER" id="PTHR15893">
    <property type="entry name" value="RIBOSOMAL PROTEIN L27"/>
    <property type="match status" value="1"/>
</dbReference>
<dbReference type="Pfam" id="PF01016">
    <property type="entry name" value="Ribosomal_L27"/>
    <property type="match status" value="1"/>
</dbReference>
<dbReference type="PRINTS" id="PR00063">
    <property type="entry name" value="RIBOSOMALL27"/>
</dbReference>
<dbReference type="SUPFAM" id="SSF110324">
    <property type="entry name" value="Ribosomal L27 protein-like"/>
    <property type="match status" value="1"/>
</dbReference>
<dbReference type="PROSITE" id="PS00831">
    <property type="entry name" value="RIBOSOMAL_L27"/>
    <property type="match status" value="1"/>
</dbReference>
<gene>
    <name evidence="1" type="primary">rpmA</name>
    <name type="ordered locus">BVU_3635</name>
</gene>
<proteinExistence type="inferred from homology"/>
<accession>A6L6D2</accession>
<feature type="chain" id="PRO_1000017414" description="Large ribosomal subunit protein bL27">
    <location>
        <begin position="1"/>
        <end position="87"/>
    </location>
</feature>
<organism>
    <name type="scientific">Phocaeicola vulgatus (strain ATCC 8482 / DSM 1447 / JCM 5826 / CCUG 4940 / NBRC 14291 / NCTC 11154)</name>
    <name type="common">Bacteroides vulgatus</name>
    <dbReference type="NCBI Taxonomy" id="435590"/>
    <lineage>
        <taxon>Bacteria</taxon>
        <taxon>Pseudomonadati</taxon>
        <taxon>Bacteroidota</taxon>
        <taxon>Bacteroidia</taxon>
        <taxon>Bacteroidales</taxon>
        <taxon>Bacteroidaceae</taxon>
        <taxon>Phocaeicola</taxon>
    </lineage>
</organism>
<evidence type="ECO:0000255" key="1">
    <source>
        <dbReference type="HAMAP-Rule" id="MF_00539"/>
    </source>
</evidence>
<evidence type="ECO:0000305" key="2"/>
<sequence length="87" mass="9251">MAHKKGVGSSKNGRESASKRLGVKIFGGQACKAGNIIVRQRGTEFHPGENIGMGRDHTLFALVDGTVCFKVGRNDRRSVSVVPAVEA</sequence>
<comment type="similarity">
    <text evidence="1">Belongs to the bacterial ribosomal protein bL27 family.</text>
</comment>
<keyword id="KW-0687">Ribonucleoprotein</keyword>
<keyword id="KW-0689">Ribosomal protein</keyword>
<name>RL27_PHOV8</name>
<reference key="1">
    <citation type="journal article" date="2007" name="PLoS Biol.">
        <title>Evolution of symbiotic bacteria in the distal human intestine.</title>
        <authorList>
            <person name="Xu J."/>
            <person name="Mahowald M.A."/>
            <person name="Ley R.E."/>
            <person name="Lozupone C.A."/>
            <person name="Hamady M."/>
            <person name="Martens E.C."/>
            <person name="Henrissat B."/>
            <person name="Coutinho P.M."/>
            <person name="Minx P."/>
            <person name="Latreille P."/>
            <person name="Cordum H."/>
            <person name="Van Brunt A."/>
            <person name="Kim K."/>
            <person name="Fulton R.S."/>
            <person name="Fulton L.A."/>
            <person name="Clifton S.W."/>
            <person name="Wilson R.K."/>
            <person name="Knight R.D."/>
            <person name="Gordon J.I."/>
        </authorList>
    </citation>
    <scope>NUCLEOTIDE SEQUENCE [LARGE SCALE GENOMIC DNA]</scope>
    <source>
        <strain>ATCC 8482 / DSM 1447 / JCM 5826 / CCUG 4940 / NBRC 14291 / NCTC 11154</strain>
    </source>
</reference>
<protein>
    <recommendedName>
        <fullName evidence="1">Large ribosomal subunit protein bL27</fullName>
    </recommendedName>
    <alternativeName>
        <fullName evidence="2">50S ribosomal protein L27</fullName>
    </alternativeName>
</protein>